<feature type="chain" id="PRO_0000177215" description="Large ribosomal subunit protein bL20">
    <location>
        <begin position="1"/>
        <end position="119"/>
    </location>
</feature>
<accession>Q6NDR6</accession>
<proteinExistence type="evidence at protein level"/>
<comment type="function">
    <text evidence="1">Binds directly to 23S ribosomal RNA and is necessary for the in vitro assembly process of the 50S ribosomal subunit. It is not involved in the protein synthesizing functions of that subunit.</text>
</comment>
<comment type="similarity">
    <text evidence="1">Belongs to the bacterial ribosomal protein bL20 family.</text>
</comment>
<protein>
    <recommendedName>
        <fullName evidence="1">Large ribosomal subunit protein bL20</fullName>
    </recommendedName>
    <alternativeName>
        <fullName evidence="2">50S ribosomal protein L20</fullName>
    </alternativeName>
    <alternativeName>
        <fullName>RRP-L20</fullName>
    </alternativeName>
</protein>
<organism>
    <name type="scientific">Rhodopseudomonas palustris (strain ATCC BAA-98 / CGA009)</name>
    <dbReference type="NCBI Taxonomy" id="258594"/>
    <lineage>
        <taxon>Bacteria</taxon>
        <taxon>Pseudomonadati</taxon>
        <taxon>Pseudomonadota</taxon>
        <taxon>Alphaproteobacteria</taxon>
        <taxon>Hyphomicrobiales</taxon>
        <taxon>Nitrobacteraceae</taxon>
        <taxon>Rhodopseudomonas</taxon>
    </lineage>
</organism>
<name>RL20_RHOPA</name>
<keyword id="KW-0687">Ribonucleoprotein</keyword>
<keyword id="KW-0689">Ribosomal protein</keyword>
<keyword id="KW-0694">RNA-binding</keyword>
<keyword id="KW-0699">rRNA-binding</keyword>
<dbReference type="EMBL" id="BX572593">
    <property type="protein sequence ID" value="CAE25482.1"/>
    <property type="molecule type" value="Genomic_DNA"/>
</dbReference>
<dbReference type="RefSeq" id="WP_011155609.1">
    <property type="nucleotide sequence ID" value="NZ_CP116810.1"/>
</dbReference>
<dbReference type="SMR" id="Q6NDR6"/>
<dbReference type="IntAct" id="Q6NDR6">
    <property type="interactions" value="1"/>
</dbReference>
<dbReference type="STRING" id="258594.RPA0038"/>
<dbReference type="GeneID" id="66891037"/>
<dbReference type="eggNOG" id="COG0292">
    <property type="taxonomic scope" value="Bacteria"/>
</dbReference>
<dbReference type="HOGENOM" id="CLU_123265_0_1_5"/>
<dbReference type="PhylomeDB" id="Q6NDR6"/>
<dbReference type="GO" id="GO:1990904">
    <property type="term" value="C:ribonucleoprotein complex"/>
    <property type="evidence" value="ECO:0007669"/>
    <property type="project" value="UniProtKB-KW"/>
</dbReference>
<dbReference type="GO" id="GO:0005840">
    <property type="term" value="C:ribosome"/>
    <property type="evidence" value="ECO:0007669"/>
    <property type="project" value="UniProtKB-KW"/>
</dbReference>
<dbReference type="GO" id="GO:0019843">
    <property type="term" value="F:rRNA binding"/>
    <property type="evidence" value="ECO:0007669"/>
    <property type="project" value="UniProtKB-UniRule"/>
</dbReference>
<dbReference type="GO" id="GO:0003735">
    <property type="term" value="F:structural constituent of ribosome"/>
    <property type="evidence" value="ECO:0007669"/>
    <property type="project" value="InterPro"/>
</dbReference>
<dbReference type="GO" id="GO:0000027">
    <property type="term" value="P:ribosomal large subunit assembly"/>
    <property type="evidence" value="ECO:0007669"/>
    <property type="project" value="UniProtKB-UniRule"/>
</dbReference>
<dbReference type="GO" id="GO:0006412">
    <property type="term" value="P:translation"/>
    <property type="evidence" value="ECO:0007669"/>
    <property type="project" value="InterPro"/>
</dbReference>
<dbReference type="CDD" id="cd07026">
    <property type="entry name" value="Ribosomal_L20"/>
    <property type="match status" value="1"/>
</dbReference>
<dbReference type="FunFam" id="1.10.1900.20:FF:000001">
    <property type="entry name" value="50S ribosomal protein L20"/>
    <property type="match status" value="1"/>
</dbReference>
<dbReference type="Gene3D" id="6.10.160.10">
    <property type="match status" value="1"/>
</dbReference>
<dbReference type="Gene3D" id="1.10.1900.20">
    <property type="entry name" value="Ribosomal protein L20"/>
    <property type="match status" value="1"/>
</dbReference>
<dbReference type="HAMAP" id="MF_00382">
    <property type="entry name" value="Ribosomal_bL20"/>
    <property type="match status" value="1"/>
</dbReference>
<dbReference type="InterPro" id="IPR005813">
    <property type="entry name" value="Ribosomal_bL20"/>
</dbReference>
<dbReference type="InterPro" id="IPR049946">
    <property type="entry name" value="RIBOSOMAL_L20_CS"/>
</dbReference>
<dbReference type="InterPro" id="IPR035566">
    <property type="entry name" value="Ribosomal_protein_bL20_C"/>
</dbReference>
<dbReference type="NCBIfam" id="TIGR01032">
    <property type="entry name" value="rplT_bact"/>
    <property type="match status" value="1"/>
</dbReference>
<dbReference type="PANTHER" id="PTHR10986">
    <property type="entry name" value="39S RIBOSOMAL PROTEIN L20"/>
    <property type="match status" value="1"/>
</dbReference>
<dbReference type="Pfam" id="PF00453">
    <property type="entry name" value="Ribosomal_L20"/>
    <property type="match status" value="1"/>
</dbReference>
<dbReference type="PRINTS" id="PR00062">
    <property type="entry name" value="RIBOSOMALL20"/>
</dbReference>
<dbReference type="SUPFAM" id="SSF74731">
    <property type="entry name" value="Ribosomal protein L20"/>
    <property type="match status" value="1"/>
</dbReference>
<dbReference type="PROSITE" id="PS00937">
    <property type="entry name" value="RIBOSOMAL_L20"/>
    <property type="match status" value="1"/>
</dbReference>
<reference key="1">
    <citation type="journal article" date="2004" name="Nat. Biotechnol.">
        <title>Complete genome sequence of the metabolically versatile photosynthetic bacterium Rhodopseudomonas palustris.</title>
        <authorList>
            <person name="Larimer F.W."/>
            <person name="Chain P."/>
            <person name="Hauser L."/>
            <person name="Lamerdin J.E."/>
            <person name="Malfatti S."/>
            <person name="Do L."/>
            <person name="Land M.L."/>
            <person name="Pelletier D.A."/>
            <person name="Beatty J.T."/>
            <person name="Lang A.S."/>
            <person name="Tabita F.R."/>
            <person name="Gibson J.L."/>
            <person name="Hanson T.E."/>
            <person name="Bobst C."/>
            <person name="Torres y Torres J.L."/>
            <person name="Peres C."/>
            <person name="Harrison F.H."/>
            <person name="Gibson J."/>
            <person name="Harwood C.S."/>
        </authorList>
    </citation>
    <scope>NUCLEOTIDE SEQUENCE [LARGE SCALE GENOMIC DNA]</scope>
    <source>
        <strain>ATCC BAA-98 / CGA009</strain>
    </source>
</reference>
<reference key="2">
    <citation type="journal article" date="2004" name="J. Proteome Res.">
        <title>Characterization of the 70S ribosome from Rhodopseudomonas palustris using an integrated 'top-down' and 'bottom-up' mass spectrometric approach.</title>
        <authorList>
            <person name="Strader M.B."/>
            <person name="VerBerkmoes N.C."/>
            <person name="Tabb D.L."/>
            <person name="Connelly H.M."/>
            <person name="Barton J.W."/>
            <person name="Bruce B.D."/>
            <person name="Pelletier D.A."/>
            <person name="Davison B.H."/>
            <person name="Hettich R.L."/>
            <person name="Larimer F.W."/>
            <person name="Hurst G.B."/>
        </authorList>
    </citation>
    <scope>IDENTIFICATION BY MASS SPECTROMETRY</scope>
    <source>
        <strain>ATCC BAA-98 / CGA009</strain>
    </source>
</reference>
<sequence>MARVKRGVTAHAKHKKVYKLAKGYRGRRKNTIRTAKAAVDKAGQYAFRDRKRKKRTFRALWIQRLNAAVRPFGMTYSVFINGLSKSGIVVDRKVLSDLAINEPAAFQAIAEKAKAALAA</sequence>
<gene>
    <name evidence="1" type="primary">rplT</name>
    <name type="ordered locus">RPA0038</name>
</gene>
<evidence type="ECO:0000255" key="1">
    <source>
        <dbReference type="HAMAP-Rule" id="MF_00382"/>
    </source>
</evidence>
<evidence type="ECO:0000305" key="2"/>